<dbReference type="EMBL" id="BC087968">
    <property type="protein sequence ID" value="AAH87968.1"/>
    <property type="molecule type" value="mRNA"/>
</dbReference>
<dbReference type="RefSeq" id="NP_001011262.1">
    <property type="nucleotide sequence ID" value="NM_001011262.1"/>
</dbReference>
<dbReference type="RefSeq" id="XP_012816523.1">
    <property type="nucleotide sequence ID" value="XM_012961069.3"/>
</dbReference>
<dbReference type="RefSeq" id="XP_012816526.1">
    <property type="nucleotide sequence ID" value="XM_012961072.3"/>
</dbReference>
<dbReference type="RefSeq" id="XP_031755068.1">
    <property type="nucleotide sequence ID" value="XM_031899208.1"/>
</dbReference>
<dbReference type="SMR" id="Q5M8L8"/>
<dbReference type="FunCoup" id="Q5M8L8">
    <property type="interactions" value="114"/>
</dbReference>
<dbReference type="STRING" id="8364.ENSXETP00000037368"/>
<dbReference type="PaxDb" id="8364-ENSXETP00000045238"/>
<dbReference type="DNASU" id="496712"/>
<dbReference type="GeneID" id="496712"/>
<dbReference type="KEGG" id="xtr:496712"/>
<dbReference type="AGR" id="Xenbase:XB-GENE-955585"/>
<dbReference type="CTD" id="84329"/>
<dbReference type="Xenbase" id="XB-GENE-955585">
    <property type="gene designation" value="hvcn1"/>
</dbReference>
<dbReference type="eggNOG" id="ENOG502RX8B">
    <property type="taxonomic scope" value="Eukaryota"/>
</dbReference>
<dbReference type="HOGENOM" id="CLU_076372_0_0_1"/>
<dbReference type="InParanoid" id="Q5M8L8"/>
<dbReference type="OMA" id="WEDEELH"/>
<dbReference type="OrthoDB" id="427456at2759"/>
<dbReference type="PhylomeDB" id="Q5M8L8"/>
<dbReference type="Reactome" id="R-XTR-1222556">
    <property type="pathway name" value="ROS and RNS production in phagocytes"/>
</dbReference>
<dbReference type="Reactome" id="R-XTR-1300642">
    <property type="pathway name" value="Sperm Motility And Taxes"/>
</dbReference>
<dbReference type="Reactome" id="R-XTR-6798695">
    <property type="pathway name" value="Neutrophil degranulation"/>
</dbReference>
<dbReference type="Proteomes" id="UP000008143">
    <property type="component" value="Chromosome 1"/>
</dbReference>
<dbReference type="Bgee" id="ENSXETG00000020934">
    <property type="expression patterns" value="Expressed in testis and 11 other cell types or tissues"/>
</dbReference>
<dbReference type="ExpressionAtlas" id="Q5M8L8">
    <property type="expression patterns" value="baseline"/>
</dbReference>
<dbReference type="GO" id="GO:0034702">
    <property type="term" value="C:monoatomic ion channel complex"/>
    <property type="evidence" value="ECO:0007669"/>
    <property type="project" value="UniProtKB-KW"/>
</dbReference>
<dbReference type="GO" id="GO:0005886">
    <property type="term" value="C:plasma membrane"/>
    <property type="evidence" value="ECO:0000250"/>
    <property type="project" value="UniProtKB"/>
</dbReference>
<dbReference type="GO" id="GO:0030171">
    <property type="term" value="F:voltage-gated proton channel activity"/>
    <property type="evidence" value="ECO:0000250"/>
    <property type="project" value="UniProtKB"/>
</dbReference>
<dbReference type="GO" id="GO:0071467">
    <property type="term" value="P:cellular response to pH"/>
    <property type="evidence" value="ECO:0000250"/>
    <property type="project" value="UniProtKB"/>
</dbReference>
<dbReference type="GO" id="GO:0071294">
    <property type="term" value="P:cellular response to zinc ion"/>
    <property type="evidence" value="ECO:0000250"/>
    <property type="project" value="UniProtKB"/>
</dbReference>
<dbReference type="GO" id="GO:1902600">
    <property type="term" value="P:proton transmembrane transport"/>
    <property type="evidence" value="ECO:0000250"/>
    <property type="project" value="UniProtKB"/>
</dbReference>
<dbReference type="FunFam" id="1.20.120.350:FF:000054">
    <property type="entry name" value="voltage-gated hydrogen channel 1"/>
    <property type="match status" value="1"/>
</dbReference>
<dbReference type="Gene3D" id="1.20.5.170">
    <property type="match status" value="1"/>
</dbReference>
<dbReference type="Gene3D" id="1.20.120.350">
    <property type="entry name" value="Voltage-gated potassium channels. Chain C"/>
    <property type="match status" value="1"/>
</dbReference>
<dbReference type="InterPro" id="IPR031846">
    <property type="entry name" value="Hvcn1"/>
</dbReference>
<dbReference type="InterPro" id="IPR005821">
    <property type="entry name" value="Ion_trans_dom"/>
</dbReference>
<dbReference type="InterPro" id="IPR027359">
    <property type="entry name" value="Volt_channel_dom_sf"/>
</dbReference>
<dbReference type="PANTHER" id="PTHR46480">
    <property type="entry name" value="F20B24.22"/>
    <property type="match status" value="1"/>
</dbReference>
<dbReference type="PANTHER" id="PTHR46480:SF1">
    <property type="entry name" value="VOLTAGE-GATED HYDROGEN CHANNEL 1"/>
    <property type="match status" value="1"/>
</dbReference>
<dbReference type="Pfam" id="PF00520">
    <property type="entry name" value="Ion_trans"/>
    <property type="match status" value="1"/>
</dbReference>
<dbReference type="SUPFAM" id="SSF81324">
    <property type="entry name" value="Voltage-gated potassium channels"/>
    <property type="match status" value="1"/>
</dbReference>
<comment type="function">
    <text evidence="1">Mediates the voltage-dependent proton permeability of excitable membranes. Forms a proton-selective channel through which protons may pass in accordance with their electrochemical gradient (By similarity).</text>
</comment>
<comment type="subunit">
    <text evidence="1">Homodimer.</text>
</comment>
<comment type="subcellular location">
    <subcellularLocation>
        <location evidence="3">Membrane</location>
        <topology evidence="3">Multi-pass membrane protein</topology>
    </subcellularLocation>
    <subcellularLocation>
        <location evidence="1">Cell membrane</location>
        <topology evidence="1">Multi-pass membrane protein</topology>
    </subcellularLocation>
</comment>
<comment type="domain">
    <text evidence="1">The segment S4 is probably the voltage-sensor and is characterized by a series of positively charged amino acids at every third position. Unlike other voltage-gated ion channels it lacks the pore domain (By similarity).</text>
</comment>
<comment type="domain">
    <text evidence="1">The C-terminal coiled coil region mediates homodimerization. It is essential for normal subcellular localization (By similarity).</text>
</comment>
<comment type="similarity">
    <text evidence="3">Belongs to the hydrogen channel family.</text>
</comment>
<organism>
    <name type="scientific">Xenopus tropicalis</name>
    <name type="common">Western clawed frog</name>
    <name type="synonym">Silurana tropicalis</name>
    <dbReference type="NCBI Taxonomy" id="8364"/>
    <lineage>
        <taxon>Eukaryota</taxon>
        <taxon>Metazoa</taxon>
        <taxon>Chordata</taxon>
        <taxon>Craniata</taxon>
        <taxon>Vertebrata</taxon>
        <taxon>Euteleostomi</taxon>
        <taxon>Amphibia</taxon>
        <taxon>Batrachia</taxon>
        <taxon>Anura</taxon>
        <taxon>Pipoidea</taxon>
        <taxon>Pipidae</taxon>
        <taxon>Xenopodinae</taxon>
        <taxon>Xenopus</taxon>
        <taxon>Silurana</taxon>
    </lineage>
</organism>
<name>HVCN1_XENTR</name>
<protein>
    <recommendedName>
        <fullName>Voltage-gated hydrogen channel 1</fullName>
    </recommendedName>
    <alternativeName>
        <fullName>Hydrogen voltage-gated channel 1</fullName>
        <shortName>HV1</shortName>
    </alternativeName>
</protein>
<feature type="chain" id="PRO_0000342192" description="Voltage-gated hydrogen channel 1">
    <location>
        <begin position="1"/>
        <end position="230"/>
    </location>
</feature>
<feature type="topological domain" description="Cytoplasmic" evidence="1">
    <location>
        <begin position="1"/>
        <end position="58"/>
    </location>
</feature>
<feature type="transmembrane region" description="Helical; Name=Segment S1" evidence="1">
    <location>
        <begin position="59"/>
        <end position="79"/>
    </location>
</feature>
<feature type="topological domain" description="Extracellular" evidence="1">
    <location>
        <begin position="80"/>
        <end position="96"/>
    </location>
</feature>
<feature type="transmembrane region" description="Helical; Name=Segment S2" evidence="1">
    <location>
        <begin position="97"/>
        <end position="119"/>
    </location>
</feature>
<feature type="topological domain" description="Cytoplasmic" evidence="1">
    <location>
        <begin position="120"/>
        <end position="127"/>
    </location>
</feature>
<feature type="transmembrane region" description="Helical; Name=Segment S3" evidence="1">
    <location>
        <begin position="128"/>
        <end position="148"/>
    </location>
</feature>
<feature type="topological domain" description="Extracellular" evidence="1">
    <location>
        <begin position="149"/>
        <end position="155"/>
    </location>
</feature>
<feature type="transmembrane region" description="Helical; Name=Segment S4" evidence="1">
    <location>
        <begin position="156"/>
        <end position="176"/>
    </location>
</feature>
<feature type="topological domain" description="Cytoplasmic" evidence="1">
    <location>
        <begin position="177"/>
        <end position="230"/>
    </location>
</feature>
<feature type="coiled-coil region" evidence="2">
    <location>
        <begin position="177"/>
        <end position="226"/>
    </location>
</feature>
<proteinExistence type="evidence at transcript level"/>
<sequence length="230" mass="26575">MAGCLRHFTSVGDDTKKKAWKEEDVEVAHEEEPKNTPHPFIASYSFRGALKWLFSSHKFQIVIICLVILDALFVLVEVLLDLELLAEKVDHIIPEIFHYLSISVLSFFILEIAGKLYAFRLEFFHHKFEVFDAAIVVISFIIDIVYISREDIFNAVGLLILLRLWRVARIVNGIIVSVKTQAEDKIHRLKENQESLLEKVAHLEQQCAQQEQEIVRLQTLLQQHNVFPAS</sequence>
<evidence type="ECO:0000250" key="1"/>
<evidence type="ECO:0000255" key="2"/>
<evidence type="ECO:0000305" key="3"/>
<keyword id="KW-1003">Cell membrane</keyword>
<keyword id="KW-0175">Coiled coil</keyword>
<keyword id="KW-0407">Ion channel</keyword>
<keyword id="KW-0406">Ion transport</keyword>
<keyword id="KW-0472">Membrane</keyword>
<keyword id="KW-1185">Reference proteome</keyword>
<keyword id="KW-0812">Transmembrane</keyword>
<keyword id="KW-1133">Transmembrane helix</keyword>
<keyword id="KW-0813">Transport</keyword>
<keyword id="KW-0851">Voltage-gated channel</keyword>
<gene>
    <name type="primary">hvcn1</name>
</gene>
<accession>Q5M8L8</accession>
<reference key="1">
    <citation type="submission" date="2004-12" db="EMBL/GenBank/DDBJ databases">
        <authorList>
            <consortium name="NIH - Xenopus Gene Collection (XGC) project"/>
        </authorList>
    </citation>
    <scope>NUCLEOTIDE SEQUENCE [LARGE SCALE MRNA]</scope>
</reference>